<name>EFTS_HALOH</name>
<proteinExistence type="inferred from homology"/>
<accession>B8CW54</accession>
<protein>
    <recommendedName>
        <fullName evidence="1">Elongation factor Ts</fullName>
        <shortName evidence="1">EF-Ts</shortName>
    </recommendedName>
</protein>
<organism>
    <name type="scientific">Halothermothrix orenii (strain H 168 / OCM 544 / DSM 9562)</name>
    <dbReference type="NCBI Taxonomy" id="373903"/>
    <lineage>
        <taxon>Bacteria</taxon>
        <taxon>Bacillati</taxon>
        <taxon>Bacillota</taxon>
        <taxon>Clostridia</taxon>
        <taxon>Halanaerobiales</taxon>
        <taxon>Halothermotrichaceae</taxon>
        <taxon>Halothermothrix</taxon>
    </lineage>
</organism>
<sequence length="299" mass="33508">MGISMKDIKELRSRTGAGVLDCKKALAETNGDIDAAVEYLREKGIAAAAKKAGRVAAEGAVNVYISDDRKKGVIVEVNSETDFVAKNDNFKDLVNKISEHLMQSDANSVDEVLKETWYQDSEKDVNTIIKEAIASIGENINLRRFEKYETNGFLQGYIHMGGKIGVLVDIDGEFNDSTRKVAKDIAMHIAAINPRYLSRDDISEEVINKEKEIYKEQMLNEGKPEHIIGQIVKGKMEKYYSEVCLLDQAFVRDEDITVGKLIEDNGLKINGFTRFELGEGIEKEEEDFAAEVMKEVNKK</sequence>
<keyword id="KW-0963">Cytoplasm</keyword>
<keyword id="KW-0251">Elongation factor</keyword>
<keyword id="KW-0648">Protein biosynthesis</keyword>
<keyword id="KW-1185">Reference proteome</keyword>
<reference key="1">
    <citation type="journal article" date="2009" name="PLoS ONE">
        <title>Genome analysis of the anaerobic thermohalophilic bacterium Halothermothrix orenii.</title>
        <authorList>
            <person name="Mavromatis K."/>
            <person name="Ivanova N."/>
            <person name="Anderson I."/>
            <person name="Lykidis A."/>
            <person name="Hooper S.D."/>
            <person name="Sun H."/>
            <person name="Kunin V."/>
            <person name="Lapidus A."/>
            <person name="Hugenholtz P."/>
            <person name="Patel B."/>
            <person name="Kyrpides N.C."/>
        </authorList>
    </citation>
    <scope>NUCLEOTIDE SEQUENCE [LARGE SCALE GENOMIC DNA]</scope>
    <source>
        <strain>H 168 / OCM 544 / DSM 9562</strain>
    </source>
</reference>
<dbReference type="EMBL" id="CP001098">
    <property type="protein sequence ID" value="ACL69523.1"/>
    <property type="molecule type" value="Genomic_DNA"/>
</dbReference>
<dbReference type="RefSeq" id="WP_012635711.1">
    <property type="nucleotide sequence ID" value="NC_011899.1"/>
</dbReference>
<dbReference type="SMR" id="B8CW54"/>
<dbReference type="STRING" id="373903.Hore_07660"/>
<dbReference type="KEGG" id="hor:Hore_07660"/>
<dbReference type="eggNOG" id="COG0264">
    <property type="taxonomic scope" value="Bacteria"/>
</dbReference>
<dbReference type="HOGENOM" id="CLU_047155_0_2_9"/>
<dbReference type="OrthoDB" id="9808348at2"/>
<dbReference type="Proteomes" id="UP000000719">
    <property type="component" value="Chromosome"/>
</dbReference>
<dbReference type="GO" id="GO:0005737">
    <property type="term" value="C:cytoplasm"/>
    <property type="evidence" value="ECO:0007669"/>
    <property type="project" value="UniProtKB-SubCell"/>
</dbReference>
<dbReference type="GO" id="GO:0003746">
    <property type="term" value="F:translation elongation factor activity"/>
    <property type="evidence" value="ECO:0007669"/>
    <property type="project" value="UniProtKB-UniRule"/>
</dbReference>
<dbReference type="CDD" id="cd14275">
    <property type="entry name" value="UBA_EF-Ts"/>
    <property type="match status" value="1"/>
</dbReference>
<dbReference type="FunFam" id="1.10.286.20:FF:000001">
    <property type="entry name" value="Elongation factor Ts"/>
    <property type="match status" value="1"/>
</dbReference>
<dbReference type="FunFam" id="1.10.8.10:FF:000001">
    <property type="entry name" value="Elongation factor Ts"/>
    <property type="match status" value="1"/>
</dbReference>
<dbReference type="Gene3D" id="1.10.286.20">
    <property type="match status" value="1"/>
</dbReference>
<dbReference type="Gene3D" id="1.10.8.10">
    <property type="entry name" value="DNA helicase RuvA subunit, C-terminal domain"/>
    <property type="match status" value="1"/>
</dbReference>
<dbReference type="Gene3D" id="3.30.479.20">
    <property type="entry name" value="Elongation factor Ts, dimerisation domain"/>
    <property type="match status" value="2"/>
</dbReference>
<dbReference type="HAMAP" id="MF_00050">
    <property type="entry name" value="EF_Ts"/>
    <property type="match status" value="1"/>
</dbReference>
<dbReference type="InterPro" id="IPR036402">
    <property type="entry name" value="EF-Ts_dimer_sf"/>
</dbReference>
<dbReference type="InterPro" id="IPR001816">
    <property type="entry name" value="Transl_elong_EFTs/EF1B"/>
</dbReference>
<dbReference type="InterPro" id="IPR014039">
    <property type="entry name" value="Transl_elong_EFTs/EF1B_dimer"/>
</dbReference>
<dbReference type="InterPro" id="IPR018101">
    <property type="entry name" value="Transl_elong_Ts_CS"/>
</dbReference>
<dbReference type="InterPro" id="IPR009060">
    <property type="entry name" value="UBA-like_sf"/>
</dbReference>
<dbReference type="NCBIfam" id="TIGR00116">
    <property type="entry name" value="tsf"/>
    <property type="match status" value="1"/>
</dbReference>
<dbReference type="PANTHER" id="PTHR11741">
    <property type="entry name" value="ELONGATION FACTOR TS"/>
    <property type="match status" value="1"/>
</dbReference>
<dbReference type="PANTHER" id="PTHR11741:SF0">
    <property type="entry name" value="ELONGATION FACTOR TS, MITOCHONDRIAL"/>
    <property type="match status" value="1"/>
</dbReference>
<dbReference type="Pfam" id="PF00889">
    <property type="entry name" value="EF_TS"/>
    <property type="match status" value="1"/>
</dbReference>
<dbReference type="SUPFAM" id="SSF54713">
    <property type="entry name" value="Elongation factor Ts (EF-Ts), dimerisation domain"/>
    <property type="match status" value="2"/>
</dbReference>
<dbReference type="SUPFAM" id="SSF46934">
    <property type="entry name" value="UBA-like"/>
    <property type="match status" value="1"/>
</dbReference>
<dbReference type="PROSITE" id="PS01126">
    <property type="entry name" value="EF_TS_1"/>
    <property type="match status" value="1"/>
</dbReference>
<dbReference type="PROSITE" id="PS01127">
    <property type="entry name" value="EF_TS_2"/>
    <property type="match status" value="1"/>
</dbReference>
<comment type="function">
    <text evidence="1">Associates with the EF-Tu.GDP complex and induces the exchange of GDP to GTP. It remains bound to the aminoacyl-tRNA.EF-Tu.GTP complex up to the GTP hydrolysis stage on the ribosome.</text>
</comment>
<comment type="subcellular location">
    <subcellularLocation>
        <location evidence="1">Cytoplasm</location>
    </subcellularLocation>
</comment>
<comment type="similarity">
    <text evidence="1">Belongs to the EF-Ts family.</text>
</comment>
<gene>
    <name evidence="1" type="primary">tsf</name>
    <name type="ordered locus">Hore_07660</name>
</gene>
<feature type="chain" id="PRO_1000202243" description="Elongation factor Ts">
    <location>
        <begin position="1"/>
        <end position="299"/>
    </location>
</feature>
<feature type="region of interest" description="Involved in Mg(2+) ion dislocation from EF-Tu" evidence="1">
    <location>
        <begin position="81"/>
        <end position="84"/>
    </location>
</feature>
<evidence type="ECO:0000255" key="1">
    <source>
        <dbReference type="HAMAP-Rule" id="MF_00050"/>
    </source>
</evidence>